<comment type="function">
    <text evidence="1">Catalyzes the NAD(P)-dependent oxidation of 4-(phosphooxy)-L-threonine (HTP) into 2-amino-3-oxo-4-(phosphooxy)butyric acid which spontaneously decarboxylates to form 3-amino-2-oxopropyl phosphate (AHAP).</text>
</comment>
<comment type="catalytic activity">
    <reaction evidence="1">
        <text>4-(phosphooxy)-L-threonine + NAD(+) = 3-amino-2-oxopropyl phosphate + CO2 + NADH</text>
        <dbReference type="Rhea" id="RHEA:32275"/>
        <dbReference type="ChEBI" id="CHEBI:16526"/>
        <dbReference type="ChEBI" id="CHEBI:57279"/>
        <dbReference type="ChEBI" id="CHEBI:57540"/>
        <dbReference type="ChEBI" id="CHEBI:57945"/>
        <dbReference type="ChEBI" id="CHEBI:58452"/>
        <dbReference type="EC" id="1.1.1.262"/>
    </reaction>
</comment>
<comment type="cofactor">
    <cofactor evidence="1">
        <name>Zn(2+)</name>
        <dbReference type="ChEBI" id="CHEBI:29105"/>
    </cofactor>
    <cofactor evidence="1">
        <name>Mg(2+)</name>
        <dbReference type="ChEBI" id="CHEBI:18420"/>
    </cofactor>
    <cofactor evidence="1">
        <name>Co(2+)</name>
        <dbReference type="ChEBI" id="CHEBI:48828"/>
    </cofactor>
    <text evidence="1">Binds 1 divalent metal cation per subunit. Can use ions such as Zn(2+), Mg(2+) or Co(2+).</text>
</comment>
<comment type="pathway">
    <text evidence="1">Cofactor biosynthesis; pyridoxine 5'-phosphate biosynthesis; pyridoxine 5'-phosphate from D-erythrose 4-phosphate: step 4/5.</text>
</comment>
<comment type="subunit">
    <text evidence="1">Homodimer.</text>
</comment>
<comment type="subcellular location">
    <subcellularLocation>
        <location evidence="1">Cytoplasm</location>
    </subcellularLocation>
</comment>
<comment type="miscellaneous">
    <text evidence="1">The active site is located at the dimer interface.</text>
</comment>
<comment type="similarity">
    <text evidence="1">Belongs to the PdxA family.</text>
</comment>
<keyword id="KW-0170">Cobalt</keyword>
<keyword id="KW-0963">Cytoplasm</keyword>
<keyword id="KW-0460">Magnesium</keyword>
<keyword id="KW-0479">Metal-binding</keyword>
<keyword id="KW-0520">NAD</keyword>
<keyword id="KW-0521">NADP</keyword>
<keyword id="KW-0560">Oxidoreductase</keyword>
<keyword id="KW-0664">Pyridoxine biosynthesis</keyword>
<keyword id="KW-0862">Zinc</keyword>
<accession>A7FMC0</accession>
<evidence type="ECO:0000255" key="1">
    <source>
        <dbReference type="HAMAP-Rule" id="MF_00536"/>
    </source>
</evidence>
<sequence>MHNHNNRLVITPGEPAGVGPDLAIALAQQDWPVELVVCADPALLLARASQLNLPLQLREYQADQPAIAQQAGSLTILPVKTAVNVVPGKLDVGNSHYVVETLAKACDGAISGEFAALVTGPVQKSIINDAGIPFIGHTEFFADRSHCQRVVMMLATEELRVALATTHLPLLAVPGAITQASLHEVITILDNDLKTKFGITQPQIYVCGLNPHAGEGGHMGHEEIDTIIPALNTLRQQGINLIGPLPADTLFQPKYLQHADAVLAMYHDQGLPVLKYQGFGRAVNITLGLPFIRTSVDHGTALELAATGTADVGSFITALNLAIKMINNSNE</sequence>
<gene>
    <name evidence="1" type="primary">pdxA</name>
    <name type="ordered locus">YpsIP31758_3443</name>
</gene>
<reference key="1">
    <citation type="journal article" date="2007" name="PLoS Genet.">
        <title>The complete genome sequence of Yersinia pseudotuberculosis IP31758, the causative agent of Far East scarlet-like fever.</title>
        <authorList>
            <person name="Eppinger M."/>
            <person name="Rosovitz M.J."/>
            <person name="Fricke W.F."/>
            <person name="Rasko D.A."/>
            <person name="Kokorina G."/>
            <person name="Fayolle C."/>
            <person name="Lindler L.E."/>
            <person name="Carniel E."/>
            <person name="Ravel J."/>
        </authorList>
    </citation>
    <scope>NUCLEOTIDE SEQUENCE [LARGE SCALE GENOMIC DNA]</scope>
    <source>
        <strain>IP 31758</strain>
    </source>
</reference>
<proteinExistence type="inferred from homology"/>
<feature type="chain" id="PRO_1000061036" description="4-hydroxythreonine-4-phosphate dehydrogenase">
    <location>
        <begin position="1"/>
        <end position="331"/>
    </location>
</feature>
<feature type="binding site" evidence="1">
    <location>
        <position position="137"/>
    </location>
    <ligand>
        <name>substrate</name>
    </ligand>
</feature>
<feature type="binding site" evidence="1">
    <location>
        <position position="138"/>
    </location>
    <ligand>
        <name>substrate</name>
    </ligand>
</feature>
<feature type="binding site" evidence="1">
    <location>
        <position position="167"/>
    </location>
    <ligand>
        <name>a divalent metal cation</name>
        <dbReference type="ChEBI" id="CHEBI:60240"/>
        <note>ligand shared between dimeric partners</note>
    </ligand>
</feature>
<feature type="binding site" evidence="1">
    <location>
        <position position="212"/>
    </location>
    <ligand>
        <name>a divalent metal cation</name>
        <dbReference type="ChEBI" id="CHEBI:60240"/>
        <note>ligand shared between dimeric partners</note>
    </ligand>
</feature>
<feature type="binding site" evidence="1">
    <location>
        <position position="267"/>
    </location>
    <ligand>
        <name>a divalent metal cation</name>
        <dbReference type="ChEBI" id="CHEBI:60240"/>
        <note>ligand shared between dimeric partners</note>
    </ligand>
</feature>
<feature type="binding site" evidence="1">
    <location>
        <position position="275"/>
    </location>
    <ligand>
        <name>substrate</name>
    </ligand>
</feature>
<feature type="binding site" evidence="1">
    <location>
        <position position="284"/>
    </location>
    <ligand>
        <name>substrate</name>
    </ligand>
</feature>
<feature type="binding site" evidence="1">
    <location>
        <position position="293"/>
    </location>
    <ligand>
        <name>substrate</name>
    </ligand>
</feature>
<organism>
    <name type="scientific">Yersinia pseudotuberculosis serotype O:1b (strain IP 31758)</name>
    <dbReference type="NCBI Taxonomy" id="349747"/>
    <lineage>
        <taxon>Bacteria</taxon>
        <taxon>Pseudomonadati</taxon>
        <taxon>Pseudomonadota</taxon>
        <taxon>Gammaproteobacteria</taxon>
        <taxon>Enterobacterales</taxon>
        <taxon>Yersiniaceae</taxon>
        <taxon>Yersinia</taxon>
    </lineage>
</organism>
<dbReference type="EC" id="1.1.1.262" evidence="1"/>
<dbReference type="EMBL" id="CP000720">
    <property type="protein sequence ID" value="ABS48495.1"/>
    <property type="molecule type" value="Genomic_DNA"/>
</dbReference>
<dbReference type="RefSeq" id="WP_011191711.1">
    <property type="nucleotide sequence ID" value="NC_009708.1"/>
</dbReference>
<dbReference type="SMR" id="A7FMC0"/>
<dbReference type="GeneID" id="49787363"/>
<dbReference type="KEGG" id="ypi:YpsIP31758_3443"/>
<dbReference type="HOGENOM" id="CLU_040168_1_0_6"/>
<dbReference type="UniPathway" id="UPA00244">
    <property type="reaction ID" value="UER00312"/>
</dbReference>
<dbReference type="Proteomes" id="UP000002412">
    <property type="component" value="Chromosome"/>
</dbReference>
<dbReference type="GO" id="GO:0005737">
    <property type="term" value="C:cytoplasm"/>
    <property type="evidence" value="ECO:0007669"/>
    <property type="project" value="UniProtKB-SubCell"/>
</dbReference>
<dbReference type="GO" id="GO:0050570">
    <property type="term" value="F:4-hydroxythreonine-4-phosphate dehydrogenase activity"/>
    <property type="evidence" value="ECO:0007669"/>
    <property type="project" value="UniProtKB-UniRule"/>
</dbReference>
<dbReference type="GO" id="GO:0050897">
    <property type="term" value="F:cobalt ion binding"/>
    <property type="evidence" value="ECO:0007669"/>
    <property type="project" value="UniProtKB-UniRule"/>
</dbReference>
<dbReference type="GO" id="GO:0000287">
    <property type="term" value="F:magnesium ion binding"/>
    <property type="evidence" value="ECO:0007669"/>
    <property type="project" value="UniProtKB-UniRule"/>
</dbReference>
<dbReference type="GO" id="GO:0051287">
    <property type="term" value="F:NAD binding"/>
    <property type="evidence" value="ECO:0007669"/>
    <property type="project" value="InterPro"/>
</dbReference>
<dbReference type="GO" id="GO:0008270">
    <property type="term" value="F:zinc ion binding"/>
    <property type="evidence" value="ECO:0007669"/>
    <property type="project" value="UniProtKB-UniRule"/>
</dbReference>
<dbReference type="GO" id="GO:0042823">
    <property type="term" value="P:pyridoxal phosphate biosynthetic process"/>
    <property type="evidence" value="ECO:0007669"/>
    <property type="project" value="UniProtKB-UniRule"/>
</dbReference>
<dbReference type="GO" id="GO:0008615">
    <property type="term" value="P:pyridoxine biosynthetic process"/>
    <property type="evidence" value="ECO:0007669"/>
    <property type="project" value="UniProtKB-UniRule"/>
</dbReference>
<dbReference type="Gene3D" id="3.40.718.10">
    <property type="entry name" value="Isopropylmalate Dehydrogenase"/>
    <property type="match status" value="1"/>
</dbReference>
<dbReference type="HAMAP" id="MF_00536">
    <property type="entry name" value="PdxA"/>
    <property type="match status" value="1"/>
</dbReference>
<dbReference type="InterPro" id="IPR037510">
    <property type="entry name" value="PdxA"/>
</dbReference>
<dbReference type="InterPro" id="IPR005255">
    <property type="entry name" value="PdxA_fam"/>
</dbReference>
<dbReference type="NCBIfam" id="TIGR00557">
    <property type="entry name" value="pdxA"/>
    <property type="match status" value="1"/>
</dbReference>
<dbReference type="PANTHER" id="PTHR30004">
    <property type="entry name" value="4-HYDROXYTHREONINE-4-PHOSPHATE DEHYDROGENASE"/>
    <property type="match status" value="1"/>
</dbReference>
<dbReference type="PANTHER" id="PTHR30004:SF5">
    <property type="entry name" value="4-HYDROXYTHREONINE-4-PHOSPHATE DEHYDROGENASE"/>
    <property type="match status" value="1"/>
</dbReference>
<dbReference type="Pfam" id="PF04166">
    <property type="entry name" value="PdxA"/>
    <property type="match status" value="1"/>
</dbReference>
<dbReference type="SUPFAM" id="SSF53659">
    <property type="entry name" value="Isocitrate/Isopropylmalate dehydrogenase-like"/>
    <property type="match status" value="1"/>
</dbReference>
<name>PDXA_YERP3</name>
<protein>
    <recommendedName>
        <fullName evidence="1">4-hydroxythreonine-4-phosphate dehydrogenase</fullName>
        <ecNumber evidence="1">1.1.1.262</ecNumber>
    </recommendedName>
    <alternativeName>
        <fullName evidence="1">4-(phosphohydroxy)-L-threonine dehydrogenase</fullName>
    </alternativeName>
</protein>